<evidence type="ECO:0000255" key="1">
    <source>
        <dbReference type="HAMAP-Rule" id="MF_00110"/>
    </source>
</evidence>
<accession>B1KP72</accession>
<proteinExistence type="inferred from homology"/>
<organism>
    <name type="scientific">Shewanella woodyi (strain ATCC 51908 / MS32)</name>
    <dbReference type="NCBI Taxonomy" id="392500"/>
    <lineage>
        <taxon>Bacteria</taxon>
        <taxon>Pseudomonadati</taxon>
        <taxon>Pseudomonadota</taxon>
        <taxon>Gammaproteobacteria</taxon>
        <taxon>Alteromonadales</taxon>
        <taxon>Shewanellaceae</taxon>
        <taxon>Shewanella</taxon>
    </lineage>
</organism>
<keyword id="KW-0028">Amino-acid biosynthesis</keyword>
<keyword id="KW-0057">Aromatic amino acid biosynthesis</keyword>
<keyword id="KW-0170">Cobalt</keyword>
<keyword id="KW-0963">Cytoplasm</keyword>
<keyword id="KW-0456">Lyase</keyword>
<keyword id="KW-0479">Metal-binding</keyword>
<keyword id="KW-0520">NAD</keyword>
<keyword id="KW-0547">Nucleotide-binding</keyword>
<keyword id="KW-1185">Reference proteome</keyword>
<keyword id="KW-0862">Zinc</keyword>
<protein>
    <recommendedName>
        <fullName evidence="1">3-dehydroquinate synthase</fullName>
        <shortName evidence="1">DHQS</shortName>
        <ecNumber evidence="1">4.2.3.4</ecNumber>
    </recommendedName>
</protein>
<reference key="1">
    <citation type="submission" date="2008-02" db="EMBL/GenBank/DDBJ databases">
        <title>Complete sequence of Shewanella woodyi ATCC 51908.</title>
        <authorList>
            <consortium name="US DOE Joint Genome Institute"/>
            <person name="Copeland A."/>
            <person name="Lucas S."/>
            <person name="Lapidus A."/>
            <person name="Glavina del Rio T."/>
            <person name="Dalin E."/>
            <person name="Tice H."/>
            <person name="Bruce D."/>
            <person name="Goodwin L."/>
            <person name="Pitluck S."/>
            <person name="Sims D."/>
            <person name="Brettin T."/>
            <person name="Detter J.C."/>
            <person name="Han C."/>
            <person name="Kuske C.R."/>
            <person name="Schmutz J."/>
            <person name="Larimer F."/>
            <person name="Land M."/>
            <person name="Hauser L."/>
            <person name="Kyrpides N."/>
            <person name="Lykidis A."/>
            <person name="Zhao J.-S."/>
            <person name="Richardson P."/>
        </authorList>
    </citation>
    <scope>NUCLEOTIDE SEQUENCE [LARGE SCALE GENOMIC DNA]</scope>
    <source>
        <strain>ATCC 51908 / MS32</strain>
    </source>
</reference>
<gene>
    <name evidence="1" type="primary">aroB</name>
    <name type="ordered locus">Swoo_0341</name>
</gene>
<comment type="function">
    <text evidence="1">Catalyzes the conversion of 3-deoxy-D-arabino-heptulosonate 7-phosphate (DAHP) to dehydroquinate (DHQ).</text>
</comment>
<comment type="catalytic activity">
    <reaction evidence="1">
        <text>7-phospho-2-dehydro-3-deoxy-D-arabino-heptonate = 3-dehydroquinate + phosphate</text>
        <dbReference type="Rhea" id="RHEA:21968"/>
        <dbReference type="ChEBI" id="CHEBI:32364"/>
        <dbReference type="ChEBI" id="CHEBI:43474"/>
        <dbReference type="ChEBI" id="CHEBI:58394"/>
        <dbReference type="EC" id="4.2.3.4"/>
    </reaction>
</comment>
<comment type="cofactor">
    <cofactor evidence="1">
        <name>Co(2+)</name>
        <dbReference type="ChEBI" id="CHEBI:48828"/>
    </cofactor>
    <cofactor evidence="1">
        <name>Zn(2+)</name>
        <dbReference type="ChEBI" id="CHEBI:29105"/>
    </cofactor>
    <text evidence="1">Binds 1 divalent metal cation per subunit. Can use either Co(2+) or Zn(2+).</text>
</comment>
<comment type="cofactor">
    <cofactor evidence="1">
        <name>NAD(+)</name>
        <dbReference type="ChEBI" id="CHEBI:57540"/>
    </cofactor>
</comment>
<comment type="pathway">
    <text evidence="1">Metabolic intermediate biosynthesis; chorismate biosynthesis; chorismate from D-erythrose 4-phosphate and phosphoenolpyruvate: step 2/7.</text>
</comment>
<comment type="subcellular location">
    <subcellularLocation>
        <location evidence="1">Cytoplasm</location>
    </subcellularLocation>
</comment>
<comment type="similarity">
    <text evidence="1">Belongs to the sugar phosphate cyclases superfamily. Dehydroquinate synthase family.</text>
</comment>
<dbReference type="EC" id="4.2.3.4" evidence="1"/>
<dbReference type="EMBL" id="CP000961">
    <property type="protein sequence ID" value="ACA84642.1"/>
    <property type="molecule type" value="Genomic_DNA"/>
</dbReference>
<dbReference type="RefSeq" id="WP_012322991.1">
    <property type="nucleotide sequence ID" value="NC_010506.1"/>
</dbReference>
<dbReference type="SMR" id="B1KP72"/>
<dbReference type="STRING" id="392500.Swoo_0341"/>
<dbReference type="KEGG" id="swd:Swoo_0341"/>
<dbReference type="eggNOG" id="COG0337">
    <property type="taxonomic scope" value="Bacteria"/>
</dbReference>
<dbReference type="HOGENOM" id="CLU_001201_0_2_6"/>
<dbReference type="UniPathway" id="UPA00053">
    <property type="reaction ID" value="UER00085"/>
</dbReference>
<dbReference type="Proteomes" id="UP000002168">
    <property type="component" value="Chromosome"/>
</dbReference>
<dbReference type="GO" id="GO:0005737">
    <property type="term" value="C:cytoplasm"/>
    <property type="evidence" value="ECO:0007669"/>
    <property type="project" value="UniProtKB-SubCell"/>
</dbReference>
<dbReference type="GO" id="GO:0003856">
    <property type="term" value="F:3-dehydroquinate synthase activity"/>
    <property type="evidence" value="ECO:0007669"/>
    <property type="project" value="UniProtKB-UniRule"/>
</dbReference>
<dbReference type="GO" id="GO:0046872">
    <property type="term" value="F:metal ion binding"/>
    <property type="evidence" value="ECO:0007669"/>
    <property type="project" value="UniProtKB-KW"/>
</dbReference>
<dbReference type="GO" id="GO:0000166">
    <property type="term" value="F:nucleotide binding"/>
    <property type="evidence" value="ECO:0007669"/>
    <property type="project" value="UniProtKB-KW"/>
</dbReference>
<dbReference type="GO" id="GO:0008652">
    <property type="term" value="P:amino acid biosynthetic process"/>
    <property type="evidence" value="ECO:0007669"/>
    <property type="project" value="UniProtKB-KW"/>
</dbReference>
<dbReference type="GO" id="GO:0009073">
    <property type="term" value="P:aromatic amino acid family biosynthetic process"/>
    <property type="evidence" value="ECO:0007669"/>
    <property type="project" value="UniProtKB-KW"/>
</dbReference>
<dbReference type="GO" id="GO:0009423">
    <property type="term" value="P:chorismate biosynthetic process"/>
    <property type="evidence" value="ECO:0007669"/>
    <property type="project" value="UniProtKB-UniRule"/>
</dbReference>
<dbReference type="CDD" id="cd08195">
    <property type="entry name" value="DHQS"/>
    <property type="match status" value="1"/>
</dbReference>
<dbReference type="FunFam" id="1.20.1090.10:FF:000002">
    <property type="entry name" value="3-dehydroquinate synthase"/>
    <property type="match status" value="1"/>
</dbReference>
<dbReference type="FunFam" id="3.40.50.1970:FF:000001">
    <property type="entry name" value="3-dehydroquinate synthase"/>
    <property type="match status" value="1"/>
</dbReference>
<dbReference type="Gene3D" id="3.40.50.1970">
    <property type="match status" value="1"/>
</dbReference>
<dbReference type="Gene3D" id="1.20.1090.10">
    <property type="entry name" value="Dehydroquinate synthase-like - alpha domain"/>
    <property type="match status" value="1"/>
</dbReference>
<dbReference type="HAMAP" id="MF_00110">
    <property type="entry name" value="DHQ_synthase"/>
    <property type="match status" value="1"/>
</dbReference>
<dbReference type="InterPro" id="IPR050071">
    <property type="entry name" value="Dehydroquinate_synthase"/>
</dbReference>
<dbReference type="InterPro" id="IPR016037">
    <property type="entry name" value="DHQ_synth_AroB"/>
</dbReference>
<dbReference type="InterPro" id="IPR030963">
    <property type="entry name" value="DHQ_synth_fam"/>
</dbReference>
<dbReference type="InterPro" id="IPR030960">
    <property type="entry name" value="DHQS/DOIS_N"/>
</dbReference>
<dbReference type="InterPro" id="IPR056179">
    <property type="entry name" value="DHQS_C"/>
</dbReference>
<dbReference type="NCBIfam" id="TIGR01357">
    <property type="entry name" value="aroB"/>
    <property type="match status" value="1"/>
</dbReference>
<dbReference type="PANTHER" id="PTHR43622">
    <property type="entry name" value="3-DEHYDROQUINATE SYNTHASE"/>
    <property type="match status" value="1"/>
</dbReference>
<dbReference type="PANTHER" id="PTHR43622:SF7">
    <property type="entry name" value="3-DEHYDROQUINATE SYNTHASE, CHLOROPLASTIC"/>
    <property type="match status" value="1"/>
</dbReference>
<dbReference type="Pfam" id="PF01761">
    <property type="entry name" value="DHQ_synthase"/>
    <property type="match status" value="1"/>
</dbReference>
<dbReference type="Pfam" id="PF24621">
    <property type="entry name" value="DHQS_C"/>
    <property type="match status" value="1"/>
</dbReference>
<dbReference type="PIRSF" id="PIRSF001455">
    <property type="entry name" value="DHQ_synth"/>
    <property type="match status" value="1"/>
</dbReference>
<dbReference type="SUPFAM" id="SSF56796">
    <property type="entry name" value="Dehydroquinate synthase-like"/>
    <property type="match status" value="1"/>
</dbReference>
<sequence>MKQIQVDLGVRSYPIVIGRNLMSCGEHFARFLQDKKILIVTNETVAPLYLEKLELQLSSFDCVEPVILPDGEQYKTLAQMDSIFTSLLQQNSGRDTVLIALGGGVIGDMTGFAAASYQRGIDFIQIPTTLLAQVDSSVGGKTAVNHPLGKNMIGAFYQPKLVVIDTDCLSTLPAKEFSAGMAEVIKYGIIWDSEFFSWLENNVERLKTLDDEALAYAIGRCCEIKADVVAEDETEQGVRALLNLGHTFGHAIEAEMGYGVWLHGEAVAAGTVLAASTASRMGLIDGSIVCRITKLFEAFDLPVSPPDSMNFEQFIKHMRRDKKVLKGQVRLVLPEAMGQAGVYSEVSDELLEDVIRCA</sequence>
<name>AROB_SHEWM</name>
<feature type="chain" id="PRO_1000094620" description="3-dehydroquinate synthase">
    <location>
        <begin position="1"/>
        <end position="358"/>
    </location>
</feature>
<feature type="binding site" evidence="1">
    <location>
        <begin position="70"/>
        <end position="75"/>
    </location>
    <ligand>
        <name>NAD(+)</name>
        <dbReference type="ChEBI" id="CHEBI:57540"/>
    </ligand>
</feature>
<feature type="binding site" evidence="1">
    <location>
        <begin position="104"/>
        <end position="108"/>
    </location>
    <ligand>
        <name>NAD(+)</name>
        <dbReference type="ChEBI" id="CHEBI:57540"/>
    </ligand>
</feature>
<feature type="binding site" evidence="1">
    <location>
        <begin position="128"/>
        <end position="129"/>
    </location>
    <ligand>
        <name>NAD(+)</name>
        <dbReference type="ChEBI" id="CHEBI:57540"/>
    </ligand>
</feature>
<feature type="binding site" evidence="1">
    <location>
        <position position="141"/>
    </location>
    <ligand>
        <name>NAD(+)</name>
        <dbReference type="ChEBI" id="CHEBI:57540"/>
    </ligand>
</feature>
<feature type="binding site" evidence="1">
    <location>
        <position position="150"/>
    </location>
    <ligand>
        <name>NAD(+)</name>
        <dbReference type="ChEBI" id="CHEBI:57540"/>
    </ligand>
</feature>
<feature type="binding site" evidence="1">
    <location>
        <begin position="168"/>
        <end position="171"/>
    </location>
    <ligand>
        <name>NAD(+)</name>
        <dbReference type="ChEBI" id="CHEBI:57540"/>
    </ligand>
</feature>
<feature type="binding site" evidence="1">
    <location>
        <position position="183"/>
    </location>
    <ligand>
        <name>Zn(2+)</name>
        <dbReference type="ChEBI" id="CHEBI:29105"/>
    </ligand>
</feature>
<feature type="binding site" evidence="1">
    <location>
        <position position="246"/>
    </location>
    <ligand>
        <name>Zn(2+)</name>
        <dbReference type="ChEBI" id="CHEBI:29105"/>
    </ligand>
</feature>
<feature type="binding site" evidence="1">
    <location>
        <position position="263"/>
    </location>
    <ligand>
        <name>Zn(2+)</name>
        <dbReference type="ChEBI" id="CHEBI:29105"/>
    </ligand>
</feature>